<keyword id="KW-0963">Cytoplasm</keyword>
<keyword id="KW-0251">Elongation factor</keyword>
<keyword id="KW-0342">GTP-binding</keyword>
<keyword id="KW-0378">Hydrolase</keyword>
<keyword id="KW-0460">Magnesium</keyword>
<keyword id="KW-0479">Metal-binding</keyword>
<keyword id="KW-0547">Nucleotide-binding</keyword>
<keyword id="KW-0648">Protein biosynthesis</keyword>
<feature type="chain" id="PRO_1000015605" description="Elongation factor Tu">
    <location>
        <begin position="1"/>
        <end position="395"/>
    </location>
</feature>
<feature type="domain" description="tr-type G">
    <location>
        <begin position="10"/>
        <end position="204"/>
    </location>
</feature>
<feature type="region of interest" description="G1" evidence="1">
    <location>
        <begin position="19"/>
        <end position="26"/>
    </location>
</feature>
<feature type="region of interest" description="G2" evidence="1">
    <location>
        <begin position="60"/>
        <end position="64"/>
    </location>
</feature>
<feature type="region of interest" description="G3" evidence="1">
    <location>
        <begin position="81"/>
        <end position="84"/>
    </location>
</feature>
<feature type="region of interest" description="G4" evidence="1">
    <location>
        <begin position="136"/>
        <end position="139"/>
    </location>
</feature>
<feature type="region of interest" description="G5" evidence="1">
    <location>
        <begin position="174"/>
        <end position="176"/>
    </location>
</feature>
<feature type="binding site" evidence="2">
    <location>
        <begin position="19"/>
        <end position="26"/>
    </location>
    <ligand>
        <name>GTP</name>
        <dbReference type="ChEBI" id="CHEBI:37565"/>
    </ligand>
</feature>
<feature type="binding site" evidence="2">
    <location>
        <position position="26"/>
    </location>
    <ligand>
        <name>Mg(2+)</name>
        <dbReference type="ChEBI" id="CHEBI:18420"/>
    </ligand>
</feature>
<feature type="binding site" evidence="2">
    <location>
        <begin position="81"/>
        <end position="85"/>
    </location>
    <ligand>
        <name>GTP</name>
        <dbReference type="ChEBI" id="CHEBI:37565"/>
    </ligand>
</feature>
<feature type="binding site" evidence="2">
    <location>
        <begin position="136"/>
        <end position="139"/>
    </location>
    <ligand>
        <name>GTP</name>
        <dbReference type="ChEBI" id="CHEBI:37565"/>
    </ligand>
</feature>
<evidence type="ECO:0000250" key="1"/>
<evidence type="ECO:0000255" key="2">
    <source>
        <dbReference type="HAMAP-Rule" id="MF_00118"/>
    </source>
</evidence>
<comment type="function">
    <text evidence="2">GTP hydrolase that promotes the GTP-dependent binding of aminoacyl-tRNA to the A-site of ribosomes during protein biosynthesis.</text>
</comment>
<comment type="catalytic activity">
    <reaction evidence="2">
        <text>GTP + H2O = GDP + phosphate + H(+)</text>
        <dbReference type="Rhea" id="RHEA:19669"/>
        <dbReference type="ChEBI" id="CHEBI:15377"/>
        <dbReference type="ChEBI" id="CHEBI:15378"/>
        <dbReference type="ChEBI" id="CHEBI:37565"/>
        <dbReference type="ChEBI" id="CHEBI:43474"/>
        <dbReference type="ChEBI" id="CHEBI:58189"/>
        <dbReference type="EC" id="3.6.5.3"/>
    </reaction>
    <physiologicalReaction direction="left-to-right" evidence="2">
        <dbReference type="Rhea" id="RHEA:19670"/>
    </physiologicalReaction>
</comment>
<comment type="subunit">
    <text evidence="2">Monomer.</text>
</comment>
<comment type="subcellular location">
    <subcellularLocation>
        <location evidence="2">Cytoplasm</location>
    </subcellularLocation>
</comment>
<comment type="similarity">
    <text evidence="2">Belongs to the TRAFAC class translation factor GTPase superfamily. Classic translation factor GTPase family. EF-Tu/EF-1A subfamily.</text>
</comment>
<name>EFTU_BACC1</name>
<gene>
    <name evidence="2" type="primary">tuf</name>
    <name type="ordered locus">BCE_0108</name>
</gene>
<sequence>MAKAKFERSKPHVNIGTIGHVDHGKTTLTAAITTVLAKAGGAEARGYDQIDAAPEERERGITISTAHVEYETETRHYAHVDCPGHADYVKNMITGAAQMDGGILVVSAADGPMPQTREHILLSRQVGVPYIVVFLNKCDMVDDEELLELVEMEVRDLLSEYGFPGDDIPVIKGSALKALQGEADWEAKIIELMAEVDAYIPTPERETDKPFLMPVEDVFSITGRGTVATGRVERGIVKVGDVVEIIGLAEENASTTVTGVEMFRKLLDQAQAGDNIGALLRGVAREDIQRGQVLAKSGSVKAHAKFKAEVFVLSKEEGGRHTPFFANYRPQFYFRTTDVTGIIQLPEGTEMVMPGDNVEMTIELIAPIAIEEGTKFSIREGGRTVGYGVVATIVE</sequence>
<accession>Q73F98</accession>
<proteinExistence type="inferred from homology"/>
<dbReference type="EC" id="3.6.5.3" evidence="2"/>
<dbReference type="EMBL" id="AE017194">
    <property type="protein sequence ID" value="AAS39044.1"/>
    <property type="molecule type" value="Genomic_DNA"/>
</dbReference>
<dbReference type="SMR" id="Q73F98"/>
<dbReference type="KEGG" id="bca:BCE_0108"/>
<dbReference type="HOGENOM" id="CLU_007265_0_1_9"/>
<dbReference type="Proteomes" id="UP000002527">
    <property type="component" value="Chromosome"/>
</dbReference>
<dbReference type="GO" id="GO:0005829">
    <property type="term" value="C:cytosol"/>
    <property type="evidence" value="ECO:0007669"/>
    <property type="project" value="TreeGrafter"/>
</dbReference>
<dbReference type="GO" id="GO:0005525">
    <property type="term" value="F:GTP binding"/>
    <property type="evidence" value="ECO:0007669"/>
    <property type="project" value="UniProtKB-UniRule"/>
</dbReference>
<dbReference type="GO" id="GO:0003924">
    <property type="term" value="F:GTPase activity"/>
    <property type="evidence" value="ECO:0007669"/>
    <property type="project" value="InterPro"/>
</dbReference>
<dbReference type="GO" id="GO:0003746">
    <property type="term" value="F:translation elongation factor activity"/>
    <property type="evidence" value="ECO:0007669"/>
    <property type="project" value="UniProtKB-UniRule"/>
</dbReference>
<dbReference type="CDD" id="cd01884">
    <property type="entry name" value="EF_Tu"/>
    <property type="match status" value="1"/>
</dbReference>
<dbReference type="CDD" id="cd03697">
    <property type="entry name" value="EFTU_II"/>
    <property type="match status" value="1"/>
</dbReference>
<dbReference type="CDD" id="cd03707">
    <property type="entry name" value="EFTU_III"/>
    <property type="match status" value="1"/>
</dbReference>
<dbReference type="FunFam" id="2.40.30.10:FF:000001">
    <property type="entry name" value="Elongation factor Tu"/>
    <property type="match status" value="1"/>
</dbReference>
<dbReference type="FunFam" id="3.40.50.300:FF:000003">
    <property type="entry name" value="Elongation factor Tu"/>
    <property type="match status" value="1"/>
</dbReference>
<dbReference type="Gene3D" id="3.40.50.300">
    <property type="entry name" value="P-loop containing nucleotide triphosphate hydrolases"/>
    <property type="match status" value="1"/>
</dbReference>
<dbReference type="Gene3D" id="2.40.30.10">
    <property type="entry name" value="Translation factors"/>
    <property type="match status" value="2"/>
</dbReference>
<dbReference type="HAMAP" id="MF_00118_B">
    <property type="entry name" value="EF_Tu_B"/>
    <property type="match status" value="1"/>
</dbReference>
<dbReference type="InterPro" id="IPR041709">
    <property type="entry name" value="EF-Tu_GTP-bd"/>
</dbReference>
<dbReference type="InterPro" id="IPR050055">
    <property type="entry name" value="EF-Tu_GTPase"/>
</dbReference>
<dbReference type="InterPro" id="IPR004161">
    <property type="entry name" value="EFTu-like_2"/>
</dbReference>
<dbReference type="InterPro" id="IPR033720">
    <property type="entry name" value="EFTU_2"/>
</dbReference>
<dbReference type="InterPro" id="IPR031157">
    <property type="entry name" value="G_TR_CS"/>
</dbReference>
<dbReference type="InterPro" id="IPR027417">
    <property type="entry name" value="P-loop_NTPase"/>
</dbReference>
<dbReference type="InterPro" id="IPR005225">
    <property type="entry name" value="Small_GTP-bd"/>
</dbReference>
<dbReference type="InterPro" id="IPR000795">
    <property type="entry name" value="T_Tr_GTP-bd_dom"/>
</dbReference>
<dbReference type="InterPro" id="IPR009000">
    <property type="entry name" value="Transl_B-barrel_sf"/>
</dbReference>
<dbReference type="InterPro" id="IPR009001">
    <property type="entry name" value="Transl_elong_EF1A/Init_IF2_C"/>
</dbReference>
<dbReference type="InterPro" id="IPR004541">
    <property type="entry name" value="Transl_elong_EFTu/EF1A_bac/org"/>
</dbReference>
<dbReference type="InterPro" id="IPR004160">
    <property type="entry name" value="Transl_elong_EFTu/EF1A_C"/>
</dbReference>
<dbReference type="NCBIfam" id="TIGR00485">
    <property type="entry name" value="EF-Tu"/>
    <property type="match status" value="1"/>
</dbReference>
<dbReference type="NCBIfam" id="NF000766">
    <property type="entry name" value="PRK00049.1"/>
    <property type="match status" value="1"/>
</dbReference>
<dbReference type="NCBIfam" id="NF009372">
    <property type="entry name" value="PRK12735.1"/>
    <property type="match status" value="1"/>
</dbReference>
<dbReference type="NCBIfam" id="NF009373">
    <property type="entry name" value="PRK12736.1"/>
    <property type="match status" value="1"/>
</dbReference>
<dbReference type="NCBIfam" id="TIGR00231">
    <property type="entry name" value="small_GTP"/>
    <property type="match status" value="1"/>
</dbReference>
<dbReference type="PANTHER" id="PTHR43721:SF22">
    <property type="entry name" value="ELONGATION FACTOR TU, MITOCHONDRIAL"/>
    <property type="match status" value="1"/>
</dbReference>
<dbReference type="PANTHER" id="PTHR43721">
    <property type="entry name" value="ELONGATION FACTOR TU-RELATED"/>
    <property type="match status" value="1"/>
</dbReference>
<dbReference type="Pfam" id="PF00009">
    <property type="entry name" value="GTP_EFTU"/>
    <property type="match status" value="1"/>
</dbReference>
<dbReference type="Pfam" id="PF03144">
    <property type="entry name" value="GTP_EFTU_D2"/>
    <property type="match status" value="1"/>
</dbReference>
<dbReference type="Pfam" id="PF03143">
    <property type="entry name" value="GTP_EFTU_D3"/>
    <property type="match status" value="1"/>
</dbReference>
<dbReference type="PRINTS" id="PR00315">
    <property type="entry name" value="ELONGATNFCT"/>
</dbReference>
<dbReference type="SUPFAM" id="SSF50465">
    <property type="entry name" value="EF-Tu/eEF-1alpha/eIF2-gamma C-terminal domain"/>
    <property type="match status" value="1"/>
</dbReference>
<dbReference type="SUPFAM" id="SSF52540">
    <property type="entry name" value="P-loop containing nucleoside triphosphate hydrolases"/>
    <property type="match status" value="1"/>
</dbReference>
<dbReference type="SUPFAM" id="SSF50447">
    <property type="entry name" value="Translation proteins"/>
    <property type="match status" value="1"/>
</dbReference>
<dbReference type="PROSITE" id="PS00301">
    <property type="entry name" value="G_TR_1"/>
    <property type="match status" value="1"/>
</dbReference>
<dbReference type="PROSITE" id="PS51722">
    <property type="entry name" value="G_TR_2"/>
    <property type="match status" value="1"/>
</dbReference>
<protein>
    <recommendedName>
        <fullName evidence="2">Elongation factor Tu</fullName>
        <shortName evidence="2">EF-Tu</shortName>
        <ecNumber evidence="2">3.6.5.3</ecNumber>
    </recommendedName>
</protein>
<organism>
    <name type="scientific">Bacillus cereus (strain ATCC 10987 / NRS 248)</name>
    <dbReference type="NCBI Taxonomy" id="222523"/>
    <lineage>
        <taxon>Bacteria</taxon>
        <taxon>Bacillati</taxon>
        <taxon>Bacillota</taxon>
        <taxon>Bacilli</taxon>
        <taxon>Bacillales</taxon>
        <taxon>Bacillaceae</taxon>
        <taxon>Bacillus</taxon>
        <taxon>Bacillus cereus group</taxon>
    </lineage>
</organism>
<reference key="1">
    <citation type="journal article" date="2004" name="Nucleic Acids Res.">
        <title>The genome sequence of Bacillus cereus ATCC 10987 reveals metabolic adaptations and a large plasmid related to Bacillus anthracis pXO1.</title>
        <authorList>
            <person name="Rasko D.A."/>
            <person name="Ravel J."/>
            <person name="Oekstad O.A."/>
            <person name="Helgason E."/>
            <person name="Cer R.Z."/>
            <person name="Jiang L."/>
            <person name="Shores K.A."/>
            <person name="Fouts D.E."/>
            <person name="Tourasse N.J."/>
            <person name="Angiuoli S.V."/>
            <person name="Kolonay J.F."/>
            <person name="Nelson W.C."/>
            <person name="Kolstoe A.-B."/>
            <person name="Fraser C.M."/>
            <person name="Read T.D."/>
        </authorList>
    </citation>
    <scope>NUCLEOTIDE SEQUENCE [LARGE SCALE GENOMIC DNA]</scope>
    <source>
        <strain>ATCC 10987 / NRS 248</strain>
    </source>
</reference>